<organism>
    <name type="scientific">Homo sapiens</name>
    <name type="common">Human</name>
    <dbReference type="NCBI Taxonomy" id="9606"/>
    <lineage>
        <taxon>Eukaryota</taxon>
        <taxon>Metazoa</taxon>
        <taxon>Chordata</taxon>
        <taxon>Craniata</taxon>
        <taxon>Vertebrata</taxon>
        <taxon>Euteleostomi</taxon>
        <taxon>Mammalia</taxon>
        <taxon>Eutheria</taxon>
        <taxon>Euarchontoglires</taxon>
        <taxon>Primates</taxon>
        <taxon>Haplorrhini</taxon>
        <taxon>Catarrhini</taxon>
        <taxon>Hominidae</taxon>
        <taxon>Homo</taxon>
    </lineage>
</organism>
<evidence type="ECO:0000250" key="1">
    <source>
        <dbReference type="UniProtKB" id="P05554"/>
    </source>
</evidence>
<evidence type="ECO:0000250" key="2">
    <source>
        <dbReference type="UniProtKB" id="P53566"/>
    </source>
</evidence>
<evidence type="ECO:0000255" key="3">
    <source>
        <dbReference type="PROSITE-ProRule" id="PRU00978"/>
    </source>
</evidence>
<evidence type="ECO:0000256" key="4">
    <source>
        <dbReference type="SAM" id="MobiDB-lite"/>
    </source>
</evidence>
<evidence type="ECO:0000269" key="5">
    <source>
    </source>
</evidence>
<evidence type="ECO:0000269" key="6">
    <source>
    </source>
</evidence>
<evidence type="ECO:0000269" key="7">
    <source>
    </source>
</evidence>
<evidence type="ECO:0000269" key="8">
    <source>
    </source>
</evidence>
<evidence type="ECO:0000269" key="9">
    <source>
    </source>
</evidence>
<evidence type="ECO:0000269" key="10">
    <source>
    </source>
</evidence>
<evidence type="ECO:0000269" key="11">
    <source>
    </source>
</evidence>
<evidence type="ECO:0000269" key="12">
    <source>
    </source>
</evidence>
<evidence type="ECO:0000269" key="13">
    <source>
    </source>
</evidence>
<evidence type="ECO:0000269" key="14">
    <source>
    </source>
</evidence>
<evidence type="ECO:0000269" key="15">
    <source>
    </source>
</evidence>
<evidence type="ECO:0000269" key="16">
    <source>
    </source>
</evidence>
<evidence type="ECO:0000269" key="17">
    <source>
    </source>
</evidence>
<evidence type="ECO:0000303" key="18">
    <source>
    </source>
</evidence>
<evidence type="ECO:0000303" key="19">
    <source>
    </source>
</evidence>
<evidence type="ECO:0000303" key="20">
    <source>
    </source>
</evidence>
<evidence type="ECO:0000305" key="21"/>
<evidence type="ECO:0000312" key="22">
    <source>
        <dbReference type="HGNC" id="HGNC:1833"/>
    </source>
</evidence>
<evidence type="ECO:0007744" key="23">
    <source>
    </source>
</evidence>
<evidence type="ECO:0007744" key="24">
    <source>
    </source>
</evidence>
<evidence type="ECO:0007744" key="25">
    <source>
    </source>
</evidence>
<evidence type="ECO:0007829" key="26">
    <source>
        <dbReference type="PDB" id="6DC0"/>
    </source>
</evidence>
<evidence type="ECO:0007829" key="27">
    <source>
        <dbReference type="PDB" id="8K8C"/>
    </source>
</evidence>
<protein>
    <recommendedName>
        <fullName evidence="22">CCAAT/enhancer-binding protein alpha</fullName>
        <shortName evidence="22">C/EBP alpha</shortName>
    </recommendedName>
</protein>
<dbReference type="EMBL" id="U34070">
    <property type="protein sequence ID" value="AAC50235.1"/>
    <property type="molecule type" value="Genomic_DNA"/>
</dbReference>
<dbReference type="EMBL" id="Y11525">
    <property type="protein sequence ID" value="CAA72289.1"/>
    <property type="molecule type" value="mRNA"/>
</dbReference>
<dbReference type="EMBL" id="EU048234">
    <property type="protein sequence ID" value="ABS82765.1"/>
    <property type="molecule type" value="Genomic_DNA"/>
</dbReference>
<dbReference type="EMBL" id="AC008738">
    <property type="status" value="NOT_ANNOTATED_CDS"/>
    <property type="molecule type" value="Genomic_DNA"/>
</dbReference>
<dbReference type="EMBL" id="BC027902">
    <property type="protein sequence ID" value="AAH27902.1"/>
    <property type="molecule type" value="mRNA"/>
</dbReference>
<dbReference type="CCDS" id="CCDS54243.1">
    <molecule id="P49715-1"/>
</dbReference>
<dbReference type="PIR" id="JC4311">
    <property type="entry name" value="JC4311"/>
</dbReference>
<dbReference type="RefSeq" id="NP_001272758.1">
    <molecule id="P49715-3"/>
    <property type="nucleotide sequence ID" value="NM_001285829.2"/>
</dbReference>
<dbReference type="RefSeq" id="NP_001274353.1">
    <molecule id="P49715-4"/>
    <property type="nucleotide sequence ID" value="NM_001287424.2"/>
</dbReference>
<dbReference type="RefSeq" id="NP_001274364.1">
    <molecule id="P49715-2"/>
    <property type="nucleotide sequence ID" value="NM_001287435.2"/>
</dbReference>
<dbReference type="RefSeq" id="NP_004355.2">
    <molecule id="P49715-1"/>
    <property type="nucleotide sequence ID" value="NM_004364.4"/>
</dbReference>
<dbReference type="PDB" id="6DC0">
    <property type="method" value="X-ray"/>
    <property type="resolution" value="2.80 A"/>
    <property type="chains" value="A/B=51-75"/>
</dbReference>
<dbReference type="PDB" id="8K8C">
    <property type="method" value="X-ray"/>
    <property type="resolution" value="2.06 A"/>
    <property type="chains" value="A/B=281-340"/>
</dbReference>
<dbReference type="PDBsum" id="6DC0"/>
<dbReference type="PDBsum" id="8K8C"/>
<dbReference type="SMR" id="P49715"/>
<dbReference type="BioGRID" id="107479">
    <property type="interactions" value="1174"/>
</dbReference>
<dbReference type="ComplexPortal" id="CPX-509">
    <property type="entry name" value="bZIP transcription factor complex, CEBPA-CEBPB"/>
</dbReference>
<dbReference type="ComplexPortal" id="CPX-6469">
    <property type="entry name" value="bZIP transcription factor complex, ATF3-CEBPA"/>
</dbReference>
<dbReference type="ComplexPortal" id="CPX-6525">
    <property type="entry name" value="bZIP transcription factor complex, ATF4-CEBPA"/>
</dbReference>
<dbReference type="ComplexPortal" id="CPX-6586">
    <property type="entry name" value="bZIP transcription factor complex, ATF5-CEBPA"/>
</dbReference>
<dbReference type="ComplexPortal" id="CPX-69">
    <property type="entry name" value="bZIP transcription factor complex, CEBPA-DDIT3"/>
</dbReference>
<dbReference type="ComplexPortal" id="CPX-7006">
    <property type="entry name" value="bZIP transcription factor complex, BATF-CEBPA"/>
</dbReference>
<dbReference type="ComplexPortal" id="CPX-7065">
    <property type="entry name" value="bZIP transcription factor complex, BATF2-CEBPA"/>
</dbReference>
<dbReference type="ComplexPortal" id="CPX-7095">
    <property type="entry name" value="bZIP transcription factor complex, BATF3-CEBPA"/>
</dbReference>
<dbReference type="ComplexPortal" id="CPX-71">
    <property type="entry name" value="bZIP transcription factor complex, CEBPA-CEBPA"/>
</dbReference>
<dbReference type="CORUM" id="P49715"/>
<dbReference type="DIP" id="DIP-37882N"/>
<dbReference type="ELM" id="P49715"/>
<dbReference type="FunCoup" id="P49715">
    <property type="interactions" value="2543"/>
</dbReference>
<dbReference type="IntAct" id="P49715">
    <property type="interactions" value="31"/>
</dbReference>
<dbReference type="MINT" id="P49715"/>
<dbReference type="STRING" id="9606.ENSP00000427514"/>
<dbReference type="GlyGen" id="P49715">
    <property type="glycosylation" value="3 sites"/>
</dbReference>
<dbReference type="iPTMnet" id="P49715"/>
<dbReference type="PhosphoSitePlus" id="P49715"/>
<dbReference type="BioMuta" id="CEBPA"/>
<dbReference type="DMDM" id="166898082"/>
<dbReference type="jPOST" id="P49715"/>
<dbReference type="MassIVE" id="P49715"/>
<dbReference type="PaxDb" id="9606-ENSP00000427514"/>
<dbReference type="PeptideAtlas" id="P49715"/>
<dbReference type="ProteomicsDB" id="56054"/>
<dbReference type="Antibodypedia" id="38083">
    <property type="antibodies" value="711 antibodies from 41 providers"/>
</dbReference>
<dbReference type="DNASU" id="1050"/>
<dbReference type="Ensembl" id="ENST00000498907.3">
    <molecule id="P49715-1"/>
    <property type="protein sequence ID" value="ENSP00000427514.1"/>
    <property type="gene ID" value="ENSG00000245848.3"/>
</dbReference>
<dbReference type="GeneID" id="1050"/>
<dbReference type="KEGG" id="hsa:1050"/>
<dbReference type="MANE-Select" id="ENST00000498907.3">
    <property type="protein sequence ID" value="ENSP00000427514.1"/>
    <property type="RefSeq nucleotide sequence ID" value="NM_004364.5"/>
    <property type="RefSeq protein sequence ID" value="NP_004355.2"/>
</dbReference>
<dbReference type="UCSC" id="uc002nun.4">
    <molecule id="P49715-1"/>
    <property type="organism name" value="human"/>
</dbReference>
<dbReference type="AGR" id="HGNC:1833"/>
<dbReference type="CTD" id="1050"/>
<dbReference type="DisGeNET" id="1050"/>
<dbReference type="GeneCards" id="CEBPA"/>
<dbReference type="GeneReviews" id="CEBPA"/>
<dbReference type="HGNC" id="HGNC:1833">
    <property type="gene designation" value="CEBPA"/>
</dbReference>
<dbReference type="HPA" id="ENSG00000245848">
    <property type="expression patterns" value="Group enriched (adipose tissue, breast, liver, skin)"/>
</dbReference>
<dbReference type="MalaCards" id="CEBPA"/>
<dbReference type="MIM" id="116897">
    <property type="type" value="gene"/>
</dbReference>
<dbReference type="MIM" id="601626">
    <property type="type" value="phenotype"/>
</dbReference>
<dbReference type="neXtProt" id="NX_P49715"/>
<dbReference type="OpenTargets" id="ENSG00000245848"/>
<dbReference type="Orphanet" id="319480">
    <property type="disease" value="Acute myeloid leukemia with CEBPA somatic mutations"/>
</dbReference>
<dbReference type="Orphanet" id="102724">
    <property type="disease" value="Acute myeloid leukemia with t(8;21)(q22;q22) translocation"/>
</dbReference>
<dbReference type="Orphanet" id="319465">
    <property type="disease" value="Inherited acute myeloid leukemia"/>
</dbReference>
<dbReference type="PharmGKB" id="PA26376"/>
<dbReference type="VEuPathDB" id="HostDB:ENSG00000245848"/>
<dbReference type="eggNOG" id="KOG3119">
    <property type="taxonomic scope" value="Eukaryota"/>
</dbReference>
<dbReference type="GeneTree" id="ENSGT00940000162646"/>
<dbReference type="HOGENOM" id="CLU_043327_2_0_1"/>
<dbReference type="InParanoid" id="P49715"/>
<dbReference type="OMA" id="QMPHLQY"/>
<dbReference type="OrthoDB" id="10032067at2759"/>
<dbReference type="PAN-GO" id="P49715">
    <property type="GO annotations" value="4 GO annotations based on evolutionary models"/>
</dbReference>
<dbReference type="PhylomeDB" id="P49715"/>
<dbReference type="TreeFam" id="TF105008"/>
<dbReference type="PathwayCommons" id="P49715"/>
<dbReference type="Reactome" id="R-HSA-381340">
    <property type="pathway name" value="Transcriptional regulation of white adipocyte differentiation"/>
</dbReference>
<dbReference type="Reactome" id="R-HSA-9616222">
    <property type="pathway name" value="Transcriptional regulation of granulopoiesis"/>
</dbReference>
<dbReference type="Reactome" id="R-HSA-9841922">
    <property type="pathway name" value="MLL4 and MLL3 complexes regulate expression of PPARG target genes in adipogenesis and hepatic steatosis"/>
</dbReference>
<dbReference type="SignaLink" id="P49715"/>
<dbReference type="SIGNOR" id="P49715"/>
<dbReference type="BioGRID-ORCS" id="1050">
    <property type="hits" value="82 hits in 1196 CRISPR screens"/>
</dbReference>
<dbReference type="CD-CODE" id="91857CE7">
    <property type="entry name" value="Nucleolus"/>
</dbReference>
<dbReference type="ChiTaRS" id="CEBPA">
    <property type="organism name" value="human"/>
</dbReference>
<dbReference type="GeneWiki" id="CEBPA"/>
<dbReference type="GenomeRNAi" id="1050"/>
<dbReference type="Pharos" id="P49715">
    <property type="development level" value="Tbio"/>
</dbReference>
<dbReference type="PRO" id="PR:P49715"/>
<dbReference type="Proteomes" id="UP000005640">
    <property type="component" value="Chromosome 19"/>
</dbReference>
<dbReference type="RNAct" id="P49715">
    <property type="molecule type" value="protein"/>
</dbReference>
<dbReference type="Bgee" id="ENSG00000245848">
    <property type="expression patterns" value="Expressed in nipple and 187 other cell types or tissues"/>
</dbReference>
<dbReference type="GO" id="GO:1990647">
    <property type="term" value="C:C/EBP complex"/>
    <property type="evidence" value="ECO:0000353"/>
    <property type="project" value="ComplexPortal"/>
</dbReference>
<dbReference type="GO" id="GO:0036488">
    <property type="term" value="C:CHOP-C/EBP complex"/>
    <property type="evidence" value="ECO:0000353"/>
    <property type="project" value="ComplexPortal"/>
</dbReference>
<dbReference type="GO" id="GO:0000785">
    <property type="term" value="C:chromatin"/>
    <property type="evidence" value="ECO:0000247"/>
    <property type="project" value="NTNU_SB"/>
</dbReference>
<dbReference type="GO" id="GO:0043231">
    <property type="term" value="C:intracellular membrane-bounded organelle"/>
    <property type="evidence" value="ECO:0000314"/>
    <property type="project" value="HPA"/>
</dbReference>
<dbReference type="GO" id="GO:0016363">
    <property type="term" value="C:nuclear matrix"/>
    <property type="evidence" value="ECO:0007669"/>
    <property type="project" value="Ensembl"/>
</dbReference>
<dbReference type="GO" id="GO:0005730">
    <property type="term" value="C:nucleolus"/>
    <property type="evidence" value="ECO:0000314"/>
    <property type="project" value="UniProtKB"/>
</dbReference>
<dbReference type="GO" id="GO:0005654">
    <property type="term" value="C:nucleoplasm"/>
    <property type="evidence" value="ECO:0000314"/>
    <property type="project" value="HPA"/>
</dbReference>
<dbReference type="GO" id="GO:0005634">
    <property type="term" value="C:nucleus"/>
    <property type="evidence" value="ECO:0000314"/>
    <property type="project" value="UniProtKB"/>
</dbReference>
<dbReference type="GO" id="GO:0035189">
    <property type="term" value="C:Rb-E2F complex"/>
    <property type="evidence" value="ECO:0007669"/>
    <property type="project" value="Ensembl"/>
</dbReference>
<dbReference type="GO" id="GO:0090575">
    <property type="term" value="C:RNA polymerase II transcription regulator complex"/>
    <property type="evidence" value="ECO:0000315"/>
    <property type="project" value="BHF-UCL"/>
</dbReference>
<dbReference type="GO" id="GO:0005667">
    <property type="term" value="C:transcription regulator complex"/>
    <property type="evidence" value="ECO:0000314"/>
    <property type="project" value="ARUK-UCL"/>
</dbReference>
<dbReference type="GO" id="GO:0031490">
    <property type="term" value="F:chromatin DNA binding"/>
    <property type="evidence" value="ECO:0007669"/>
    <property type="project" value="Ensembl"/>
</dbReference>
<dbReference type="GO" id="GO:0003677">
    <property type="term" value="F:DNA binding"/>
    <property type="evidence" value="ECO:0000304"/>
    <property type="project" value="ProtInc"/>
</dbReference>
<dbReference type="GO" id="GO:0001228">
    <property type="term" value="F:DNA-binding transcription activator activity, RNA polymerase II-specific"/>
    <property type="evidence" value="ECO:0000315"/>
    <property type="project" value="BHF-UCL"/>
</dbReference>
<dbReference type="GO" id="GO:0003700">
    <property type="term" value="F:DNA-binding transcription factor activity"/>
    <property type="evidence" value="ECO:0000314"/>
    <property type="project" value="UniProtKB"/>
</dbReference>
<dbReference type="GO" id="GO:0000981">
    <property type="term" value="F:DNA-binding transcription factor activity, RNA polymerase II-specific"/>
    <property type="evidence" value="ECO:0000247"/>
    <property type="project" value="NTNU_SB"/>
</dbReference>
<dbReference type="GO" id="GO:0042826">
    <property type="term" value="F:histone deacetylase binding"/>
    <property type="evidence" value="ECO:0007669"/>
    <property type="project" value="Ensembl"/>
</dbReference>
<dbReference type="GO" id="GO:0071837">
    <property type="term" value="F:HMG box domain binding"/>
    <property type="evidence" value="ECO:0007669"/>
    <property type="project" value="Ensembl"/>
</dbReference>
<dbReference type="GO" id="GO:0042802">
    <property type="term" value="F:identical protein binding"/>
    <property type="evidence" value="ECO:0000353"/>
    <property type="project" value="IntAct"/>
</dbReference>
<dbReference type="GO" id="GO:0019900">
    <property type="term" value="F:kinase binding"/>
    <property type="evidence" value="ECO:0000353"/>
    <property type="project" value="UniProtKB"/>
</dbReference>
<dbReference type="GO" id="GO:0046982">
    <property type="term" value="F:protein heterodimerization activity"/>
    <property type="evidence" value="ECO:0007669"/>
    <property type="project" value="Ensembl"/>
</dbReference>
<dbReference type="GO" id="GO:0042803">
    <property type="term" value="F:protein homodimerization activity"/>
    <property type="evidence" value="ECO:0000250"/>
    <property type="project" value="UniProtKB"/>
</dbReference>
<dbReference type="GO" id="GO:0044877">
    <property type="term" value="F:protein-containing complex binding"/>
    <property type="evidence" value="ECO:0007669"/>
    <property type="project" value="Ensembl"/>
</dbReference>
<dbReference type="GO" id="GO:0001163">
    <property type="term" value="F:RNA polymerase I transcription regulatory region sequence-specific DNA binding"/>
    <property type="evidence" value="ECO:0000314"/>
    <property type="project" value="UniProtKB"/>
</dbReference>
<dbReference type="GO" id="GO:0000978">
    <property type="term" value="F:RNA polymerase II cis-regulatory region sequence-specific DNA binding"/>
    <property type="evidence" value="ECO:0000318"/>
    <property type="project" value="GO_Central"/>
</dbReference>
<dbReference type="GO" id="GO:0061629">
    <property type="term" value="F:RNA polymerase II-specific DNA-binding transcription factor binding"/>
    <property type="evidence" value="ECO:0000353"/>
    <property type="project" value="ARUK-UCL"/>
</dbReference>
<dbReference type="GO" id="GO:0097677">
    <property type="term" value="F:STAT family protein binding"/>
    <property type="evidence" value="ECO:0000353"/>
    <property type="project" value="UniProtKB"/>
</dbReference>
<dbReference type="GO" id="GO:0000976">
    <property type="term" value="F:transcription cis-regulatory region binding"/>
    <property type="evidence" value="ECO:0000314"/>
    <property type="project" value="UniProtKB"/>
</dbReference>
<dbReference type="GO" id="GO:0006953">
    <property type="term" value="P:acute-phase response"/>
    <property type="evidence" value="ECO:0007669"/>
    <property type="project" value="Ensembl"/>
</dbReference>
<dbReference type="GO" id="GO:0031100">
    <property type="term" value="P:animal organ regeneration"/>
    <property type="evidence" value="ECO:0007669"/>
    <property type="project" value="Ensembl"/>
</dbReference>
<dbReference type="GO" id="GO:0050873">
    <property type="term" value="P:brown fat cell differentiation"/>
    <property type="evidence" value="ECO:0007669"/>
    <property type="project" value="Ensembl"/>
</dbReference>
<dbReference type="GO" id="GO:0071285">
    <property type="term" value="P:cellular response to lithium ion"/>
    <property type="evidence" value="ECO:0007669"/>
    <property type="project" value="Ensembl"/>
</dbReference>
<dbReference type="GO" id="GO:0071356">
    <property type="term" value="P:cellular response to tumor necrosis factor"/>
    <property type="evidence" value="ECO:0007669"/>
    <property type="project" value="Ensembl"/>
</dbReference>
<dbReference type="GO" id="GO:0071466">
    <property type="term" value="P:cellular response to xenobiotic stimulus"/>
    <property type="evidence" value="ECO:0007669"/>
    <property type="project" value="Ensembl"/>
</dbReference>
<dbReference type="GO" id="GO:0008203">
    <property type="term" value="P:cholesterol metabolic process"/>
    <property type="evidence" value="ECO:0007669"/>
    <property type="project" value="Ensembl"/>
</dbReference>
<dbReference type="GO" id="GO:0019221">
    <property type="term" value="P:cytokine-mediated signaling pathway"/>
    <property type="evidence" value="ECO:0000303"/>
    <property type="project" value="UniProtKB"/>
</dbReference>
<dbReference type="GO" id="GO:0006351">
    <property type="term" value="P:DNA-templated transcription"/>
    <property type="evidence" value="ECO:0007669"/>
    <property type="project" value="InterPro"/>
</dbReference>
<dbReference type="GO" id="GO:0001892">
    <property type="term" value="P:embryonic placenta development"/>
    <property type="evidence" value="ECO:0007669"/>
    <property type="project" value="Ensembl"/>
</dbReference>
<dbReference type="GO" id="GO:0097009">
    <property type="term" value="P:energy homeostasis"/>
    <property type="evidence" value="ECO:0000250"/>
    <property type="project" value="UniProt"/>
</dbReference>
<dbReference type="GO" id="GO:0002070">
    <property type="term" value="P:epithelial cell maturation"/>
    <property type="evidence" value="ECO:0007669"/>
    <property type="project" value="Ensembl"/>
</dbReference>
<dbReference type="GO" id="GO:0045444">
    <property type="term" value="P:fat cell differentiation"/>
    <property type="evidence" value="ECO:0000250"/>
    <property type="project" value="UniProtKB"/>
</dbReference>
<dbReference type="GO" id="GO:0006091">
    <property type="term" value="P:generation of precursor metabolites and energy"/>
    <property type="evidence" value="ECO:0000304"/>
    <property type="project" value="ProtInc"/>
</dbReference>
<dbReference type="GO" id="GO:0042593">
    <property type="term" value="P:glucose homeostasis"/>
    <property type="evidence" value="ECO:0000250"/>
    <property type="project" value="UniProtKB"/>
</dbReference>
<dbReference type="GO" id="GO:0030851">
    <property type="term" value="P:granulocyte differentiation"/>
    <property type="evidence" value="ECO:0000250"/>
    <property type="project" value="UniProtKB"/>
</dbReference>
<dbReference type="GO" id="GO:0071425">
    <property type="term" value="P:hematopoietic stem cell proliferation"/>
    <property type="evidence" value="ECO:0007669"/>
    <property type="project" value="Ensembl"/>
</dbReference>
<dbReference type="GO" id="GO:0048839">
    <property type="term" value="P:inner ear development"/>
    <property type="evidence" value="ECO:0007669"/>
    <property type="project" value="Ensembl"/>
</dbReference>
<dbReference type="GO" id="GO:0140467">
    <property type="term" value="P:integrated stress response signaling"/>
    <property type="evidence" value="ECO:0000303"/>
    <property type="project" value="ComplexPortal"/>
</dbReference>
<dbReference type="GO" id="GO:0070102">
    <property type="term" value="P:interleukin-6-mediated signaling pathway"/>
    <property type="evidence" value="ECO:0000314"/>
    <property type="project" value="ARUK-UCL"/>
</dbReference>
<dbReference type="GO" id="GO:0055088">
    <property type="term" value="P:lipid homeostasis"/>
    <property type="evidence" value="ECO:0000250"/>
    <property type="project" value="UniProtKB"/>
</dbReference>
<dbReference type="GO" id="GO:0001889">
    <property type="term" value="P:liver development"/>
    <property type="evidence" value="ECO:0000250"/>
    <property type="project" value="UniProtKB"/>
</dbReference>
<dbReference type="GO" id="GO:0030324">
    <property type="term" value="P:lung development"/>
    <property type="evidence" value="ECO:0000250"/>
    <property type="project" value="UniProtKB"/>
</dbReference>
<dbReference type="GO" id="GO:0030225">
    <property type="term" value="P:macrophage differentiation"/>
    <property type="evidence" value="ECO:0007669"/>
    <property type="project" value="Ensembl"/>
</dbReference>
<dbReference type="GO" id="GO:0007613">
    <property type="term" value="P:memory"/>
    <property type="evidence" value="ECO:0007669"/>
    <property type="project" value="Ensembl"/>
</dbReference>
<dbReference type="GO" id="GO:0007005">
    <property type="term" value="P:mitochondrion organization"/>
    <property type="evidence" value="ECO:0007669"/>
    <property type="project" value="Ensembl"/>
</dbReference>
<dbReference type="GO" id="GO:0030099">
    <property type="term" value="P:myeloid cell differentiation"/>
    <property type="evidence" value="ECO:0000318"/>
    <property type="project" value="GO_Central"/>
</dbReference>
<dbReference type="GO" id="GO:0045786">
    <property type="term" value="P:negative regulation of cell cycle"/>
    <property type="evidence" value="ECO:0007669"/>
    <property type="project" value="Ensembl"/>
</dbReference>
<dbReference type="GO" id="GO:0008285">
    <property type="term" value="P:negative regulation of cell population proliferation"/>
    <property type="evidence" value="ECO:0000314"/>
    <property type="project" value="UniProtKB"/>
</dbReference>
<dbReference type="GO" id="GO:0045892">
    <property type="term" value="P:negative regulation of DNA-templated transcription"/>
    <property type="evidence" value="ECO:0000250"/>
    <property type="project" value="UniProtKB"/>
</dbReference>
<dbReference type="GO" id="GO:1902034">
    <property type="term" value="P:negative regulation of hematopoietic stem cell proliferation"/>
    <property type="evidence" value="ECO:0007669"/>
    <property type="project" value="Ensembl"/>
</dbReference>
<dbReference type="GO" id="GO:0000122">
    <property type="term" value="P:negative regulation of transcription by RNA polymerase II"/>
    <property type="evidence" value="ECO:0000266"/>
    <property type="project" value="ComplexPortal"/>
</dbReference>
<dbReference type="GO" id="GO:0007219">
    <property type="term" value="P:Notch signaling pathway"/>
    <property type="evidence" value="ECO:0007669"/>
    <property type="project" value="Ensembl"/>
</dbReference>
<dbReference type="GO" id="GO:0002076">
    <property type="term" value="P:osteoblast development"/>
    <property type="evidence" value="ECO:0007669"/>
    <property type="project" value="Ensembl"/>
</dbReference>
<dbReference type="GO" id="GO:2000144">
    <property type="term" value="P:positive regulation of DNA-templated transcription initiation"/>
    <property type="evidence" value="ECO:0000314"/>
    <property type="project" value="UniProtKB"/>
</dbReference>
<dbReference type="GO" id="GO:0045600">
    <property type="term" value="P:positive regulation of fat cell differentiation"/>
    <property type="evidence" value="ECO:0007669"/>
    <property type="project" value="Ensembl"/>
</dbReference>
<dbReference type="GO" id="GO:0010628">
    <property type="term" value="P:positive regulation of gene expression"/>
    <property type="evidence" value="ECO:0007669"/>
    <property type="project" value="Ensembl"/>
</dbReference>
<dbReference type="GO" id="GO:0050729">
    <property type="term" value="P:positive regulation of inflammatory response"/>
    <property type="evidence" value="ECO:0000250"/>
    <property type="project" value="ARUK-UCL"/>
</dbReference>
<dbReference type="GO" id="GO:0043032">
    <property type="term" value="P:positive regulation of macrophage activation"/>
    <property type="evidence" value="ECO:0000250"/>
    <property type="project" value="ARUK-UCL"/>
</dbReference>
<dbReference type="GO" id="GO:0045669">
    <property type="term" value="P:positive regulation of osteoblast differentiation"/>
    <property type="evidence" value="ECO:0007669"/>
    <property type="project" value="Ensembl"/>
</dbReference>
<dbReference type="GO" id="GO:0032436">
    <property type="term" value="P:positive regulation of proteasomal ubiquitin-dependent protein catabolic process"/>
    <property type="evidence" value="ECO:0000304"/>
    <property type="project" value="ParkinsonsUK-UCL"/>
</dbReference>
<dbReference type="GO" id="GO:0045944">
    <property type="term" value="P:positive regulation of transcription by RNA polymerase II"/>
    <property type="evidence" value="ECO:0000314"/>
    <property type="project" value="UniProtKB"/>
</dbReference>
<dbReference type="GO" id="GO:0051726">
    <property type="term" value="P:regulation of cell cycle"/>
    <property type="evidence" value="ECO:0000304"/>
    <property type="project" value="ParkinsonsUK-UCL"/>
</dbReference>
<dbReference type="GO" id="GO:0006355">
    <property type="term" value="P:regulation of DNA-templated transcription"/>
    <property type="evidence" value="ECO:0000314"/>
    <property type="project" value="UniProtKB"/>
</dbReference>
<dbReference type="GO" id="GO:0006357">
    <property type="term" value="P:regulation of transcription by RNA polymerase II"/>
    <property type="evidence" value="ECO:0000318"/>
    <property type="project" value="GO_Central"/>
</dbReference>
<dbReference type="GO" id="GO:0071548">
    <property type="term" value="P:response to dexamethasone"/>
    <property type="evidence" value="ECO:0007669"/>
    <property type="project" value="Ensembl"/>
</dbReference>
<dbReference type="GO" id="GO:0080184">
    <property type="term" value="P:response to phenylpropanoid"/>
    <property type="evidence" value="ECO:0007669"/>
    <property type="project" value="Ensembl"/>
</dbReference>
<dbReference type="GO" id="GO:0033274">
    <property type="term" value="P:response to vitamin B2"/>
    <property type="evidence" value="ECO:0007669"/>
    <property type="project" value="Ensembl"/>
</dbReference>
<dbReference type="GO" id="GO:0006360">
    <property type="term" value="P:transcription by RNA polymerase I"/>
    <property type="evidence" value="ECO:0000314"/>
    <property type="project" value="UniProtKB"/>
</dbReference>
<dbReference type="GO" id="GO:0000050">
    <property type="term" value="P:urea cycle"/>
    <property type="evidence" value="ECO:0007669"/>
    <property type="project" value="Ensembl"/>
</dbReference>
<dbReference type="GO" id="GO:0050872">
    <property type="term" value="P:white fat cell differentiation"/>
    <property type="evidence" value="ECO:0007669"/>
    <property type="project" value="Ensembl"/>
</dbReference>
<dbReference type="CDD" id="cd14711">
    <property type="entry name" value="bZIP_CEBPA"/>
    <property type="match status" value="1"/>
</dbReference>
<dbReference type="FunFam" id="1.20.5.170:FF:000028">
    <property type="entry name" value="CCAAT/enhancer-binding protein beta"/>
    <property type="match status" value="1"/>
</dbReference>
<dbReference type="Gene3D" id="1.20.5.170">
    <property type="match status" value="1"/>
</dbReference>
<dbReference type="InterPro" id="IPR004827">
    <property type="entry name" value="bZIP"/>
</dbReference>
<dbReference type="InterPro" id="IPR046347">
    <property type="entry name" value="bZIP_sf"/>
</dbReference>
<dbReference type="InterPro" id="IPR031106">
    <property type="entry name" value="C/EBP"/>
</dbReference>
<dbReference type="InterPro" id="IPR016468">
    <property type="entry name" value="C/EBP_chordates"/>
</dbReference>
<dbReference type="PANTHER" id="PTHR23334">
    <property type="entry name" value="CCAAT/ENHANCER BINDING PROTEIN"/>
    <property type="match status" value="1"/>
</dbReference>
<dbReference type="PANTHER" id="PTHR23334:SF5">
    <property type="entry name" value="CCAAT_ENHANCER-BINDING PROTEIN ALPHA"/>
    <property type="match status" value="1"/>
</dbReference>
<dbReference type="Pfam" id="PF07716">
    <property type="entry name" value="bZIP_2"/>
    <property type="match status" value="1"/>
</dbReference>
<dbReference type="PIRSF" id="PIRSF005879">
    <property type="entry name" value="CCAAT/enhancer-binding"/>
    <property type="match status" value="1"/>
</dbReference>
<dbReference type="SMART" id="SM00338">
    <property type="entry name" value="BRLZ"/>
    <property type="match status" value="1"/>
</dbReference>
<dbReference type="SUPFAM" id="SSF57959">
    <property type="entry name" value="Leucine zipper domain"/>
    <property type="match status" value="1"/>
</dbReference>
<dbReference type="PROSITE" id="PS50217">
    <property type="entry name" value="BZIP"/>
    <property type="match status" value="1"/>
</dbReference>
<keyword id="KW-0002">3D-structure</keyword>
<keyword id="KW-0007">Acetylation</keyword>
<keyword id="KW-0010">Activator</keyword>
<keyword id="KW-0024">Alternative initiation</keyword>
<keyword id="KW-0217">Developmental protein</keyword>
<keyword id="KW-0225">Disease variant</keyword>
<keyword id="KW-0238">DNA-binding</keyword>
<keyword id="KW-0945">Host-virus interaction</keyword>
<keyword id="KW-1017">Isopeptide bond</keyword>
<keyword id="KW-0539">Nucleus</keyword>
<keyword id="KW-0597">Phosphoprotein</keyword>
<keyword id="KW-1267">Proteomics identification</keyword>
<keyword id="KW-1185">Reference proteome</keyword>
<keyword id="KW-0804">Transcription</keyword>
<keyword id="KW-0805">Transcription regulation</keyword>
<keyword id="KW-0832">Ubl conjugation</keyword>
<accession>P49715</accession>
<accession>A7LNP2</accession>
<accession>P78319</accession>
<accession>Q05CA4</accession>
<feature type="chain" id="PRO_0000076613" description="CCAAT/enhancer-binding protein alpha">
    <location>
        <begin position="1"/>
        <end position="358"/>
    </location>
</feature>
<feature type="domain" description="bZIP" evidence="3">
    <location>
        <begin position="282"/>
        <end position="345"/>
    </location>
</feature>
<feature type="DNA-binding region" evidence="1">
    <location>
        <begin position="285"/>
        <end position="300"/>
    </location>
</feature>
<feature type="region of interest" description="Required to repress E2F1:TFDP1-mediated transcription, to inhibit cell cycle and to induce adipocyte differentiation" evidence="1">
    <location>
        <begin position="1"/>
        <end position="70"/>
    </location>
</feature>
<feature type="region of interest" description="Disordered" evidence="4">
    <location>
        <begin position="1"/>
        <end position="55"/>
    </location>
</feature>
<feature type="region of interest" description="Required for interaction with TRIB1" evidence="15">
    <location>
        <begin position="54"/>
        <end position="72"/>
    </location>
</feature>
<feature type="region of interest" description="Required to induce adipocyte differentiation" evidence="1">
    <location>
        <begin position="128"/>
        <end position="204"/>
    </location>
</feature>
<feature type="region of interest" description="Disordered" evidence="4">
    <location>
        <begin position="178"/>
        <end position="201"/>
    </location>
</feature>
<feature type="region of interest" description="Required to functionally cooperate with SREBF1 in promoter activation" evidence="2">
    <location>
        <begin position="182"/>
        <end position="198"/>
    </location>
</feature>
<feature type="region of interest" description="Disordered" evidence="4">
    <location>
        <begin position="217"/>
        <end position="291"/>
    </location>
</feature>
<feature type="region of interest" description="Interaction with FOXO1" evidence="2">
    <location>
        <begin position="244"/>
        <end position="358"/>
    </location>
</feature>
<feature type="region of interest" description="Basic motif" evidence="3">
    <location>
        <begin position="286"/>
        <end position="313"/>
    </location>
</feature>
<feature type="region of interest" description="Leucine-zipper" evidence="3">
    <location>
        <begin position="317"/>
        <end position="345"/>
    </location>
</feature>
<feature type="compositionally biased region" description="Low complexity" evidence="4">
    <location>
        <begin position="29"/>
        <end position="39"/>
    </location>
</feature>
<feature type="compositionally biased region" description="Pro residues" evidence="4">
    <location>
        <begin position="40"/>
        <end position="49"/>
    </location>
</feature>
<feature type="compositionally biased region" description="Pro residues" evidence="4">
    <location>
        <begin position="181"/>
        <end position="199"/>
    </location>
</feature>
<feature type="compositionally biased region" description="Pro residues" evidence="4">
    <location>
        <begin position="224"/>
        <end position="238"/>
    </location>
</feature>
<feature type="compositionally biased region" description="Low complexity" evidence="4">
    <location>
        <begin position="239"/>
        <end position="259"/>
    </location>
</feature>
<feature type="compositionally biased region" description="Basic and acidic residues" evidence="4">
    <location>
        <begin position="276"/>
        <end position="291"/>
    </location>
</feature>
<feature type="modified residue" description="N6-acetyllysine; alternate" evidence="23">
    <location>
        <position position="161"/>
    </location>
</feature>
<feature type="modified residue" description="Phosphoserine" evidence="10">
    <location>
        <position position="190"/>
    </location>
</feature>
<feature type="modified residue" description="Phosphothreonine; by GSK3" evidence="2">
    <location>
        <position position="226"/>
    </location>
</feature>
<feature type="modified residue" description="Phosphothreonine; by GSK3" evidence="2">
    <location>
        <position position="230"/>
    </location>
</feature>
<feature type="modified residue" description="Phosphoserine; by GSK3" evidence="2">
    <location>
        <position position="234"/>
    </location>
</feature>
<feature type="cross-link" description="Glycyl lysine isopeptide (Lys-Gly) (interchain with G-Cter in SUMO2); alternate" evidence="24 25">
    <location>
        <position position="161"/>
    </location>
</feature>
<feature type="splice variant" id="VSP_057547" description="In isoform 3.">
    <location>
        <begin position="1"/>
        <end position="119"/>
    </location>
</feature>
<feature type="splice variant" id="VSP_057548" description="In isoform 2.">
    <location>
        <begin position="1"/>
        <end position="14"/>
    </location>
</feature>
<feature type="splice variant" id="VSP_057607" description="In isoform 4.">
    <original>M</original>
    <variation>MRGRGRAGSPGGRRRRPAQAGGRRGSPCRENSNSPM</variation>
    <location>
        <position position="1"/>
    </location>
</feature>
<feature type="sequence variant" id="VAR_072677" description="In AML; no effect on expression; no effect on DNA-binding or transactivation activity; dbSNP:rs28931590." evidence="6">
    <original>H</original>
    <variation>L</variation>
    <location>
        <position position="84"/>
    </location>
</feature>
<feature type="sequence variant" id="VAR_072678" description="In AML; nuclear; no effect on expression; loss of DNA-binding and transactivation activity." evidence="6">
    <original>Q</original>
    <variation>QK</variation>
    <location>
        <position position="312"/>
    </location>
</feature>
<feature type="mutagenesis site" description="Decreased interaction with TRIB1." evidence="15">
    <original>I</original>
    <variation>A</variation>
    <location>
        <position position="55"/>
    </location>
</feature>
<feature type="mutagenesis site" description="No effect on interaction with TRIB1." evidence="15">
    <original>E</original>
    <variation>T</variation>
    <location>
        <position position="57"/>
    </location>
</feature>
<feature type="mutagenesis site" description="No effect on interaction with TRIB1." evidence="15">
    <original>H</original>
    <variation>D</variation>
    <location>
        <position position="58"/>
    </location>
</feature>
<feature type="mutagenesis site" description="Decreased interaction with TRIB1." evidence="15">
    <original>E</original>
    <variation>A</variation>
    <location>
        <position position="59"/>
    </location>
</feature>
<feature type="mutagenesis site" description="Decreased interaction with TRIB1." evidence="15">
    <original>S</original>
    <variation>A</variation>
    <location>
        <position position="61"/>
    </location>
</feature>
<feature type="mutagenesis site" description="Decreased interaction with TRIB1." evidence="15">
    <original>I</original>
    <variation>A</variation>
    <location>
        <position position="62"/>
    </location>
</feature>
<feature type="mutagenesis site" description="No effect on interaction with TRIB1." evidence="15">
    <original>D</original>
    <variation>A</variation>
    <location>
        <position position="63"/>
    </location>
</feature>
<feature type="mutagenesis site" description="Decreased interaction with TRIB1." evidence="15">
    <original>I</original>
    <variation>A</variation>
    <location>
        <position position="64"/>
    </location>
</feature>
<feature type="mutagenesis site" description="No effect on interaction with TRIB1." evidence="15">
    <original>S</original>
    <variation>A</variation>
    <location>
        <position position="65"/>
    </location>
</feature>
<feature type="mutagenesis site" description="Decreased interaction with TRIB1." evidence="15">
    <original>Y</original>
    <variation>A</variation>
    <location>
        <position position="67"/>
    </location>
</feature>
<feature type="mutagenesis site" description="No effect on interaction with TRIB1." evidence="15">
    <original>Y</original>
    <variation>F</variation>
    <location>
        <position position="67"/>
    </location>
</feature>
<feature type="mutagenesis site" description="Decreased interaction with TRIB1." evidence="15">
    <original>I</original>
    <variation>A</variation>
    <location>
        <position position="68"/>
    </location>
</feature>
<feature type="mutagenesis site" description="No effect on interaction with TRIB1." evidence="15">
    <original>D</original>
    <variation>A</variation>
    <location>
        <position position="69"/>
    </location>
</feature>
<feature type="sequence conflict" description="In Ref. 1; AAC50235." evidence="21" ref="1">
    <original>AQ</original>
    <variation>PK</variation>
    <location>
        <begin position="40"/>
        <end position="41"/>
    </location>
</feature>
<feature type="sequence conflict" description="In Ref. 2; CAA72289." evidence="21" ref="2">
    <original>VGPT</original>
    <variation>WAH</variation>
    <location>
        <begin position="95"/>
        <end position="98"/>
    </location>
</feature>
<feature type="sequence conflict" description="In Ref. 2; CAA72289." evidence="21" ref="2">
    <original>L</original>
    <variation>V</variation>
    <location>
        <position position="241"/>
    </location>
</feature>
<feature type="sequence conflict" description="In Ref. 2; CAA72289." evidence="21" ref="2">
    <original>GPG</original>
    <variation>ALA</variation>
    <location>
        <begin position="248"/>
        <end position="250"/>
    </location>
</feature>
<feature type="sequence conflict" description="In Ref. 1; AAC50235." evidence="21" ref="1">
    <original>S</original>
    <variation>T</variation>
    <location>
        <position position="269"/>
    </location>
</feature>
<feature type="helix" evidence="26">
    <location>
        <begin position="64"/>
        <end position="66"/>
    </location>
</feature>
<feature type="helix" evidence="26">
    <location>
        <begin position="70"/>
        <end position="73"/>
    </location>
</feature>
<feature type="helix" evidence="27">
    <location>
        <begin position="284"/>
        <end position="338"/>
    </location>
</feature>
<sequence length="358" mass="37561">MESADFYEAEPRPPMSSHLQSPPHAPSSAAFGFPRGAGPAQPPAPPAAPEPLGGICEHETSIDISAYIDPAAFNDEFLADLFQHSRQQEKAKAAVGPTGGGGGGDFDYPGAPAGPGGAVMPGGAHGPPPGYGCAAAGYLDGRLEPLYERVGAPALRPLVIKQEPREEDEAKQLALAGLFPYQPPPPPPPSHPHPHPPPAHLAAPHLQFQIAHCGQTTMHLQPGHPTPPPTPVPSPHPAPALGAAGLPGPGSALKGLGAAHPDLRASGGSGAGKAKKSVDKNSNEYRVRRERNNIAVRKSRDKAKQRNVETQQKVLELTSDNDRLRKRVEQLSRELDTLRGIFRQLPESSLVKAMGNCA</sequence>
<name>CEBPA_HUMAN</name>
<proteinExistence type="evidence at protein level"/>
<reference key="1">
    <citation type="journal article" date="1995" name="Biochem. Biophys. Res. Commun.">
        <title>Molecular cloning, sequence, and expression patterns of the human gene encoding CCAAT/enhancer binding protein alpha (C/EBP alpha).</title>
        <authorList>
            <person name="Antonson P."/>
            <person name="Xanthopoulos K.G."/>
        </authorList>
    </citation>
    <scope>NUCLEOTIDE SEQUENCE [GENOMIC DNA]</scope>
    <source>
        <tissue>Umbilical cord</tissue>
    </source>
</reference>
<reference key="2">
    <citation type="journal article" date="1997" name="Biol. Chem. Hoppe-Seyler">
        <title>Transcription factor C/EBP-alpha: novel sites of expression and cloning of the human gene.</title>
        <authorList>
            <person name="Swart G.W.M."/>
            <person name="van Groningen J.J.M."/>
            <person name="van Ruissen F."/>
            <person name="Bergers M."/>
            <person name="Schalwijk J."/>
        </authorList>
    </citation>
    <scope>NUCLEOTIDE SEQUENCE [MRNA]</scope>
    <source>
        <tissue>Liver</tissue>
    </source>
</reference>
<reference key="3">
    <citation type="submission" date="2007-07" db="EMBL/GenBank/DDBJ databases">
        <authorList>
            <consortium name="SeattleSNPs variation discovery resource"/>
        </authorList>
    </citation>
    <scope>NUCLEOTIDE SEQUENCE [GENOMIC DNA]</scope>
</reference>
<reference key="4">
    <citation type="journal article" date="2004" name="Nature">
        <title>The DNA sequence and biology of human chromosome 19.</title>
        <authorList>
            <person name="Grimwood J."/>
            <person name="Gordon L.A."/>
            <person name="Olsen A.S."/>
            <person name="Terry A."/>
            <person name="Schmutz J."/>
            <person name="Lamerdin J.E."/>
            <person name="Hellsten U."/>
            <person name="Goodstein D."/>
            <person name="Couronne O."/>
            <person name="Tran-Gyamfi M."/>
            <person name="Aerts A."/>
            <person name="Altherr M."/>
            <person name="Ashworth L."/>
            <person name="Bajorek E."/>
            <person name="Black S."/>
            <person name="Branscomb E."/>
            <person name="Caenepeel S."/>
            <person name="Carrano A.V."/>
            <person name="Caoile C."/>
            <person name="Chan Y.M."/>
            <person name="Christensen M."/>
            <person name="Cleland C.A."/>
            <person name="Copeland A."/>
            <person name="Dalin E."/>
            <person name="Dehal P."/>
            <person name="Denys M."/>
            <person name="Detter J.C."/>
            <person name="Escobar J."/>
            <person name="Flowers D."/>
            <person name="Fotopulos D."/>
            <person name="Garcia C."/>
            <person name="Georgescu A.M."/>
            <person name="Glavina T."/>
            <person name="Gomez M."/>
            <person name="Gonzales E."/>
            <person name="Groza M."/>
            <person name="Hammon N."/>
            <person name="Hawkins T."/>
            <person name="Haydu L."/>
            <person name="Ho I."/>
            <person name="Huang W."/>
            <person name="Israni S."/>
            <person name="Jett J."/>
            <person name="Kadner K."/>
            <person name="Kimball H."/>
            <person name="Kobayashi A."/>
            <person name="Larionov V."/>
            <person name="Leem S.-H."/>
            <person name="Lopez F."/>
            <person name="Lou Y."/>
            <person name="Lowry S."/>
            <person name="Malfatti S."/>
            <person name="Martinez D."/>
            <person name="McCready P.M."/>
            <person name="Medina C."/>
            <person name="Morgan J."/>
            <person name="Nelson K."/>
            <person name="Nolan M."/>
            <person name="Ovcharenko I."/>
            <person name="Pitluck S."/>
            <person name="Pollard M."/>
            <person name="Popkie A.P."/>
            <person name="Predki P."/>
            <person name="Quan G."/>
            <person name="Ramirez L."/>
            <person name="Rash S."/>
            <person name="Retterer J."/>
            <person name="Rodriguez A."/>
            <person name="Rogers S."/>
            <person name="Salamov A."/>
            <person name="Salazar A."/>
            <person name="She X."/>
            <person name="Smith D."/>
            <person name="Slezak T."/>
            <person name="Solovyev V."/>
            <person name="Thayer N."/>
            <person name="Tice H."/>
            <person name="Tsai M."/>
            <person name="Ustaszewska A."/>
            <person name="Vo N."/>
            <person name="Wagner M."/>
            <person name="Wheeler J."/>
            <person name="Wu K."/>
            <person name="Xie G."/>
            <person name="Yang J."/>
            <person name="Dubchak I."/>
            <person name="Furey T.S."/>
            <person name="DeJong P."/>
            <person name="Dickson M."/>
            <person name="Gordon D."/>
            <person name="Eichler E.E."/>
            <person name="Pennacchio L.A."/>
            <person name="Richardson P."/>
            <person name="Stubbs L."/>
            <person name="Rokhsar D.S."/>
            <person name="Myers R.M."/>
            <person name="Rubin E.M."/>
            <person name="Lucas S.M."/>
        </authorList>
    </citation>
    <scope>NUCLEOTIDE SEQUENCE [LARGE SCALE GENOMIC DNA]</scope>
</reference>
<reference key="5">
    <citation type="journal article" date="2004" name="Genome Res.">
        <title>The status, quality, and expansion of the NIH full-length cDNA project: the Mammalian Gene Collection (MGC).</title>
        <authorList>
            <consortium name="The MGC Project Team"/>
        </authorList>
    </citation>
    <scope>NUCLEOTIDE SEQUENCE [LARGE SCALE MRNA] OF 1-133</scope>
    <source>
        <tissue>Pancreas</tissue>
    </source>
</reference>
<reference key="6">
    <citation type="journal article" date="1999" name="J. Biol. Chem.">
        <title>Interaction of hepatitis B viral X protein and CCAAT/enhancer-binding protein alpha synergistically activates the hepatitis B viral enhancer II/pregenomic promoter.</title>
        <authorList>
            <person name="Choi B.H."/>
            <person name="Park G.T."/>
            <person name="Rho H.M."/>
        </authorList>
    </citation>
    <scope>INTERACTION WITH HBV PROTEIN X (MICROBIAL INFECTION)</scope>
</reference>
<reference key="7">
    <citation type="journal article" date="2000" name="J. Cell Biol.">
        <title>Ubinuclein, a novel nuclear protein interacting with cellular and viral transcription factors.</title>
        <authorList>
            <person name="Aho S."/>
            <person name="Buisson M."/>
            <person name="Pajunen T."/>
            <person name="Ryoo Y.W."/>
            <person name="Giot J.-F."/>
            <person name="Gruffat H."/>
            <person name="Sergeant A."/>
            <person name="Uitto J."/>
        </authorList>
    </citation>
    <scope>INTERACTION WITH UBN1</scope>
</reference>
<reference key="8">
    <citation type="journal article" date="2003" name="Genes Chromosomes Cancer">
        <title>Mutations of CEBPA in acute myeloid leukemia FAB types M1 and M2.</title>
        <authorList>
            <person name="Snaddon J."/>
            <person name="Smith M.L."/>
            <person name="Neat M."/>
            <person name="Cambal-Parrales M."/>
            <person name="Dixon-McIver A."/>
            <person name="Arch R."/>
            <person name="Amess J.A."/>
            <person name="Rohatiner A.Z."/>
            <person name="Lister T.A."/>
            <person name="Fitzgibbon J."/>
        </authorList>
    </citation>
    <scope>INVOLVEMENT IN AML</scope>
</reference>
<reference key="9">
    <citation type="journal article" date="2004" name="Genes Dev.">
        <title>Liver tumors escape negative control of proliferation via PI3K/Akt-mediated block of C/EBP alpha growth inhibitory activity.</title>
        <authorList>
            <person name="Wang G.L."/>
            <person name="Iakova P."/>
            <person name="Wilde M."/>
            <person name="Awad S."/>
            <person name="Timchenko N.A."/>
        </authorList>
    </citation>
    <scope>INTERACTION WITH CDK2; CDK4; E2F4; RB1 AND SMARCA2</scope>
    <scope>PHOSPHORYLATION AT SER-190</scope>
</reference>
<reference key="10">
    <citation type="journal article" date="2004" name="J. Virol.">
        <title>CCAAT/enhancer binding protein alpha binds to the Epstein-Barr virus (EBV) ZTA protein through oligomeric interactions and contributes to cooperative transcriptional activation of the ZTA promoter through direct binding to the ZII and ZIIIB motifs during induction of the EBV lytic cycle.</title>
        <authorList>
            <person name="Wu F.Y."/>
            <person name="Wang S.E."/>
            <person name="Chen H."/>
            <person name="Wang L."/>
            <person name="Hayward S.D."/>
            <person name="Hayward G.S."/>
        </authorList>
    </citation>
    <scope>INTERACTION WITH EPSTEIN-BARR VIRUS BZLF1 PROTEIN (MICROBIAL INFECTION)</scope>
</reference>
<reference key="11">
    <citation type="journal article" date="2004" name="J. Biol. Chem.">
        <title>The CCAAT enhancer-binding protein alpha (C/EBPalpha) requires a SWI/SNF complex for proliferation arrest.</title>
        <authorList>
            <person name="Muller C."/>
            <person name="Calkhoven C.F."/>
            <person name="Sha X."/>
            <person name="Leutz A."/>
        </authorList>
    </citation>
    <scope>FUNCTION (ISOFORMS 1 AND 3)</scope>
</reference>
<reference key="12">
    <citation type="journal article" date="2004" name="N. Engl. J. Med.">
        <title>Mutation of CEBPA in familial acute myeloid leukemia.</title>
        <authorList>
            <person name="Smith M.L."/>
            <person name="Cavenagh J.D."/>
            <person name="Lister T.A."/>
            <person name="Fitzgibbon J."/>
        </authorList>
    </citation>
    <scope>INVOLVEMENT IN AML</scope>
</reference>
<reference key="13">
    <citation type="journal article" date="2009" name="Science">
        <title>Lysine acetylation targets protein complexes and co-regulates major cellular functions.</title>
        <authorList>
            <person name="Choudhary C."/>
            <person name="Kumar C."/>
            <person name="Gnad F."/>
            <person name="Nielsen M.L."/>
            <person name="Rehman M."/>
            <person name="Walther T.C."/>
            <person name="Olsen J.V."/>
            <person name="Mann M."/>
        </authorList>
    </citation>
    <scope>ACETYLATION [LARGE SCALE ANALYSIS] AT LYS-161</scope>
    <scope>IDENTIFICATION BY MASS SPECTROMETRY [LARGE SCALE ANALYSIS]</scope>
</reference>
<reference key="14">
    <citation type="journal article" date="2010" name="Blood">
        <title>Differential ability of Tribbles family members to promote degradation of C/EBPalpha and induce acute myelogenous leukemia.</title>
        <authorList>
            <person name="Dedhia P.H."/>
            <person name="Keeshan K."/>
            <person name="Uljon S."/>
            <person name="Xu L."/>
            <person name="Vega M.E."/>
            <person name="Shestova O."/>
            <person name="Zaks-Zilberman M."/>
            <person name="Romany C."/>
            <person name="Blacklow S.C."/>
            <person name="Pear W.S."/>
        </authorList>
    </citation>
    <scope>INTERACTION WITH TRIB1</scope>
</reference>
<reference key="15">
    <citation type="journal article" date="2010" name="EMBO J.">
        <title>Nucleolar retention of a translational C/EBPalpha isoform stimulates rDNA transcription and cell size.</title>
        <authorList>
            <person name="Muller C."/>
            <person name="Bremer A."/>
            <person name="Schreiber S."/>
            <person name="Eichwald S."/>
            <person name="Calkhoven C.F."/>
        </authorList>
    </citation>
    <scope>FUNCTION (ISOFORM 4)</scope>
    <scope>ALTERNATIVE INITIATION</scope>
    <scope>IDENTIFICATION OF NON-CANONICAL INITIATION CODON</scope>
    <scope>SUBCELLULAR LOCATION (ISOFORM 4)</scope>
    <scope>INTERACTION WITH NPM1; TAF1A AND UBTF</scope>
</reference>
<reference key="16">
    <citation type="journal article" date="2010" name="Mol. Cell. Biol.">
        <title>Repression of transcriptional activity of C/EBPalpha by E2F-dimerization partner complexes.</title>
        <authorList>
            <person name="Zaragoza K."/>
            <person name="Begay V."/>
            <person name="Schuetz A."/>
            <person name="Heinemann U."/>
            <person name="Leutz A."/>
        </authorList>
    </citation>
    <scope>INTERACTION WITH TFDP1; TFDP2 AND E2F1</scope>
</reference>
<reference key="17">
    <citation type="journal article" date="2014" name="Nat. Struct. Mol. Biol.">
        <title>Uncovering global SUMOylation signaling networks in a site-specific manner.</title>
        <authorList>
            <person name="Hendriks I.A."/>
            <person name="D'Souza R.C."/>
            <person name="Yang B."/>
            <person name="Verlaan-de Vries M."/>
            <person name="Mann M."/>
            <person name="Vertegaal A.C."/>
        </authorList>
    </citation>
    <scope>SUMOYLATION [LARGE SCALE ANALYSIS] AT LYS-161</scope>
    <scope>IDENTIFICATION BY MASS SPECTROMETRY [LARGE SCALE ANALYSIS]</scope>
</reference>
<reference key="18">
    <citation type="journal article" date="2015" name="Structure">
        <title>Molecular mechanism of CCAAT-enhancer binding protein recruitment by the TRIB1 pseudokinase.</title>
        <authorList>
            <person name="Murphy J.M."/>
            <person name="Nakatani Y."/>
            <person name="Jamieson S.A."/>
            <person name="Dai W."/>
            <person name="Lucet I.S."/>
            <person name="Mace P.D."/>
        </authorList>
    </citation>
    <scope>INTERACTION WITH TRIB1</scope>
    <scope>DOMAIN</scope>
    <scope>MUTAGENESIS OF ILE-55; GLU-57; HIS-58; GLU-59; SER-61; ILE-62; ASP-63; ILE-64; SER-65; TYR-67; ILE-68 AND ASP-69</scope>
</reference>
<reference key="19">
    <citation type="journal article" date="2016" name="PLoS Genet.">
        <title>Comparative Transcriptomic and Epigenomic Analyses Reveal New Regulators of Murine Brown Adipogenesis.</title>
        <authorList>
            <person name="Brunmeir R."/>
            <person name="Wu J."/>
            <person name="Peng X."/>
            <person name="Kim S.Y."/>
            <person name="Julien S.G."/>
            <person name="Zhang Q."/>
            <person name="Xie W."/>
            <person name="Xu F."/>
        </authorList>
    </citation>
    <scope>INTERACTION WITH SIX1</scope>
</reference>
<reference key="20">
    <citation type="journal article" date="2016" name="Structure">
        <title>Structural basis for substrate selectivity of the E3 ligase COP1.</title>
        <authorList>
            <person name="Uljon S."/>
            <person name="Xu X."/>
            <person name="Durzynska I."/>
            <person name="Stein S."/>
            <person name="Adelmant G."/>
            <person name="Marto J.A."/>
            <person name="Pear W.S."/>
            <person name="Blacklow S.C."/>
        </authorList>
    </citation>
    <scope>UBIQUITINATION</scope>
</reference>
<reference key="21">
    <citation type="journal article" date="2017" name="Nat. Struct. Mol. Biol.">
        <title>Site-specific mapping of the human SUMO proteome reveals co-modification with phosphorylation.</title>
        <authorList>
            <person name="Hendriks I.A."/>
            <person name="Lyon D."/>
            <person name="Young C."/>
            <person name="Jensen L.J."/>
            <person name="Vertegaal A.C."/>
            <person name="Nielsen M.L."/>
        </authorList>
    </citation>
    <scope>SUMOYLATION [LARGE SCALE ANALYSIS] AT LYS-161</scope>
    <scope>IDENTIFICATION BY MASS SPECTROMETRY [LARGE SCALE ANALYSIS]</scope>
</reference>
<reference key="22">
    <citation type="journal article" date="2001" name="Nat. Genet.">
        <title>Dominant-negative mutations of CEBPA, encoding CCAAT/enhancer binding protein-alpha (C/EBPalpha), in acute myeloid leukemia.</title>
        <authorList>
            <person name="Pabst T."/>
            <person name="Mueller B.U."/>
            <person name="Zhang P."/>
            <person name="Radomska H.S."/>
            <person name="Narravula S."/>
            <person name="Schnittger S."/>
            <person name="Behre G."/>
            <person name="Hiddemann W."/>
            <person name="Tenen D.G."/>
        </authorList>
    </citation>
    <scope>VARIANTS AML LEU-84 AND LYS-312 INS</scope>
    <scope>CHARACTERIZATION OF VARIANTS AML LEU-84 AND LYS-312 INS</scope>
    <scope>INVOLVEMENT IN AML</scope>
    <scope>FUNCTION</scope>
    <scope>SUBCELLULAR LOCATION</scope>
    <scope>ALTERNATIVE TRANSLATIONAL INITIATION</scope>
    <scope>DNA-BINDING</scope>
</reference>
<comment type="function">
    <text evidence="1 2 6 8">Transcription factor that coordinates proliferation arrest and the differentiation of myeloid progenitors, adipocytes, hepatocytes, and cells of the lung and the placenta. Binds directly to the consensus DNA sequence 5'-T[TG]NNGNAA[TG]-3' acting as an activator on distinct target genes (PubMed:11242107). During early embryogenesis, plays essential and redundant functions with CEBPB. Essential for the transition from common myeloid progenitors (CMP) to granulocyte/monocyte progenitors (GMP). Critical for the proper development of the liver and the lung (By similarity). Necessary for terminal adipocyte differentiation, is required for postnatal maintenance of systemic energy homeostasis and lipid storage (By similarity). To regulate these different processes at the proper moment and tissue, interplays with other transcription factors and modulators. Down-regulates the expression of genes that maintain cells in an undifferentiated and proliferative state through E2F1 repression, which is critical for its ability to induce adipocyte and granulocyte terminal differentiation. Reciprocally E2F1 blocks adipocyte differentiation by binding to specific promoters and repressing CEBPA binding to its target gene promoters. Proliferation arrest also depends on a functional binding to SWI/SNF complex (PubMed:14660596). In liver, regulates gluconeogenesis and lipogenesis through different mechanisms. To regulate gluconeogenesis, functionally cooperates with FOXO1 binding to IRE-controlled promoters and regulating the expression of target genes such as PCK1 or G6PC1. To modulate lipogenesis, interacts and transcriptionally synergizes with SREBF1 in promoter activation of specific lipogenic target genes such as ACAS2. In adipose tissue, seems to act as FOXO1 coactivator accessing to ADIPOQ promoter through FOXO1 binding sites (By similarity).</text>
</comment>
<comment type="function">
    <molecule>Isoform 3</molecule>
    <text evidence="1 2 8">Can act as dominant-negative. Binds DNA and have transctivation activity, even if much less efficiently than isoform 2. Does not inhibit cell proliferation (PubMed:14660596).</text>
</comment>
<comment type="function">
    <molecule>Isoform 4</molecule>
    <text evidence="12">Directly and specifically enhances ribosomal DNA transcription interacting with RNA polymerase I-specific cofactors and inducing histone acetylation.</text>
</comment>
<comment type="subunit">
    <text evidence="1 2 5 10 12 13 14 15 16">Binds DNA as a homodimer and as a heterodimer. Can form stable heterodimers with CEBPB, CEBPD, CEBPE and CEBPG (By similarity). Interacts with PRDM16 (By similarity). Interacts with UBN1 (PubMed:10725330). Interacts with ZNF638; this interaction increases transcriptional activation (By similarity). Interacts with the complex TFDP2:E2F1; the interaction prevents CEBPA binding to target gene promoters and represses its transcriptional activity (PubMed:20176812). Interacts with RB1 (PubMed:15107404). Interacts (when phosphorylated at Ser-190) with CDK2, CDK4, E2F4 and SMARCA2 (PubMed:15107404). Interacts with SREBPF1 (By similarity). Interacts with FOXO1 (via the Fork-head domain); the interaction increases when FOXO1 is deacetylated (By similarity). Interacts with SIX1 (PubMed:27923061). Interacts (via recognition sequence) with TRIB1 (PubMed:20410507, PubMed:26455797). Interacts (via bZIP domain) with OVOL2 (via zinc-finger domains); the interaction inhibits the transcription factor activity of CEBPA and is required to repress adipogenesis (By similarity).</text>
</comment>
<comment type="subunit">
    <molecule>Isoform 1</molecule>
    <text evidence="12">Interacts with TAF1A and UBTF.</text>
</comment>
<comment type="subunit">
    <molecule>Isoform 4</molecule>
    <text evidence="12">Interacts with TAF1A and UBTF (PubMed:20075868). Interacts with NPM1 (PubMed:20075868).</text>
</comment>
<comment type="subunit">
    <text evidence="17">(Microbial infection) Interacts with HBV protein X.</text>
</comment>
<comment type="subunit">
    <text evidence="9">(Microbial infection) Interacts with Epstein-Barr virus lytic switch protein BZLF1; this interaction induces G1 cell cycle arrest.</text>
</comment>
<comment type="interaction">
    <interactant intactId="EBI-1172054">
        <id>P49715</id>
    </interactant>
    <interactant intactId="EBI-712767">
        <id>P18847</id>
        <label>ATF3</label>
    </interactant>
    <organismsDiffer>false</organismsDiffer>
    <experiments>2</experiments>
</comment>
<comment type="interaction">
    <interactant intactId="EBI-1172054">
        <id>P49715</id>
    </interactant>
    <interactant intactId="EBI-492498">
        <id>P18848</id>
        <label>ATF4</label>
    </interactant>
    <organismsDiffer>false</organismsDiffer>
    <experiments>4</experiments>
</comment>
<comment type="interaction">
    <interactant intactId="EBI-1172054">
        <id>P49715</id>
    </interactant>
    <interactant intactId="EBI-492509">
        <id>Q9Y2D1</id>
        <label>ATF5</label>
    </interactant>
    <organismsDiffer>false</organismsDiffer>
    <experiments>2</experiments>
</comment>
<comment type="interaction">
    <interactant intactId="EBI-1172054">
        <id>P49715</id>
    </interactant>
    <interactant intactId="EBI-749503">
        <id>Q16520</id>
        <label>BATF</label>
    </interactant>
    <organismsDiffer>false</organismsDiffer>
    <experiments>3</experiments>
</comment>
<comment type="interaction">
    <interactant intactId="EBI-1172054">
        <id>P49715</id>
    </interactant>
    <interactant intactId="EBI-742695">
        <id>Q8N1L9</id>
        <label>BATF2</label>
    </interactant>
    <organismsDiffer>false</organismsDiffer>
    <experiments>2</experiments>
</comment>
<comment type="interaction">
    <interactant intactId="EBI-1172054">
        <id>P49715</id>
    </interactant>
    <interactant intactId="EBI-10312707">
        <id>Q9NR55</id>
        <label>BATF3</label>
    </interactant>
    <organismsDiffer>false</organismsDiffer>
    <experiments>2</experiments>
</comment>
<comment type="interaction">
    <interactant intactId="EBI-1172054">
        <id>P49715</id>
    </interactant>
    <interactant intactId="EBI-8514176">
        <id>P47902</id>
        <label>CDX1</label>
    </interactant>
    <organismsDiffer>false</organismsDiffer>
    <experiments>3</experiments>
</comment>
<comment type="interaction">
    <interactant intactId="EBI-1172054">
        <id>P49715</id>
    </interactant>
    <interactant intactId="EBI-1172054">
        <id>P49715</id>
        <label>CEBPA</label>
    </interactant>
    <organismsDiffer>false</organismsDiffer>
    <experiments>2</experiments>
</comment>
<comment type="interaction">
    <interactant intactId="EBI-1172054">
        <id>P49715</id>
    </interactant>
    <interactant intactId="EBI-969696">
        <id>P17676</id>
        <label>CEBPB</label>
    </interactant>
    <organismsDiffer>false</organismsDiffer>
    <experiments>2</experiments>
</comment>
<comment type="interaction">
    <interactant intactId="EBI-1172054">
        <id>P49715</id>
    </interactant>
    <interactant intactId="EBI-7962058">
        <id>P49716</id>
        <label>CEBPD</label>
    </interactant>
    <organismsDiffer>false</organismsDiffer>
    <experiments>2</experiments>
</comment>
<comment type="interaction">
    <interactant intactId="EBI-1172054">
        <id>P49715</id>
    </interactant>
    <interactant intactId="EBI-3907048">
        <id>Q15744</id>
        <label>CEBPE</label>
    </interactant>
    <organismsDiffer>false</organismsDiffer>
    <experiments>2</experiments>
</comment>
<comment type="interaction">
    <interactant intactId="EBI-1172054">
        <id>P49715</id>
    </interactant>
    <interactant intactId="EBI-740209">
        <id>P53567</id>
        <label>CEBPG</label>
    </interactant>
    <organismsDiffer>false</organismsDiffer>
    <experiments>4</experiments>
</comment>
<comment type="interaction">
    <interactant intactId="EBI-1172054">
        <id>P49715</id>
    </interactant>
    <interactant intactId="EBI-742651">
        <id>P35638</id>
        <label>DDIT3</label>
    </interactant>
    <organismsDiffer>false</organismsDiffer>
    <experiments>5</experiments>
</comment>
<comment type="interaction">
    <interactant intactId="EBI-1172054">
        <id>P49715</id>
    </interactant>
    <interactant intactId="EBI-852851">
        <id>P01100</id>
        <label>FOS</label>
    </interactant>
    <organismsDiffer>false</organismsDiffer>
    <experiments>2</experiments>
</comment>
<comment type="interaction">
    <interactant intactId="EBI-1172054">
        <id>P49715</id>
    </interactant>
    <interactant intactId="EBI-8800907">
        <id>P24001-2</id>
        <label>IL32</label>
    </interactant>
    <organismsDiffer>false</organismsDiffer>
    <experiments>7</experiments>
</comment>
<comment type="interaction">
    <interactant intactId="EBI-1172054">
        <id>P49715</id>
    </interactant>
    <interactant intactId="EBI-355676">
        <id>P09874</id>
        <label>PARP1</label>
    </interactant>
    <organismsDiffer>false</organismsDiffer>
    <experiments>2</experiments>
</comment>
<comment type="interaction">
    <interactant intactId="EBI-1172054">
        <id>P49715</id>
    </interactant>
    <interactant intactId="EBI-7028618">
        <id>P03122</id>
        <label>E2</label>
    </interactant>
    <organismsDiffer>true</organismsDiffer>
    <experiments>2</experiments>
</comment>
<comment type="interaction">
    <interactant intactId="EBI-1172054">
        <id>P49715</id>
    </interactant>
    <interactant intactId="EBI-7136851">
        <id>P06422</id>
        <label>E2</label>
    </interactant>
    <organismsDiffer>true</organismsDiffer>
    <experiments>4</experiments>
</comment>
<comment type="interaction">
    <interactant intactId="EBI-16180754">
        <id>P49715-1</id>
    </interactant>
    <interactant intactId="EBI-16180744">
        <id>Q96RU8-1</id>
        <label>TRIB1</label>
    </interactant>
    <organismsDiffer>false</organismsDiffer>
    <experiments>2</experiments>
</comment>
<comment type="subcellular location">
    <subcellularLocation>
        <location evidence="6">Nucleus</location>
    </subcellularLocation>
</comment>
<comment type="subcellular location">
    <molecule>Isoform 4</molecule>
    <subcellularLocation>
        <location evidence="12">Nucleus</location>
        <location evidence="12">Nucleolus</location>
    </subcellularLocation>
</comment>
<comment type="alternative products">
    <event type="alternative initiation"/>
    <isoform>
        <id>P49715-1</id>
        <name>1</name>
        <sequence type="displayed"/>
    </isoform>
    <isoform>
        <id>P49715-2</id>
        <name>2</name>
        <name evidence="18">C/EBPalpha-p42</name>
        <sequence type="described" ref="VSP_057548"/>
    </isoform>
    <isoform>
        <id>P49715-3</id>
        <name>3</name>
        <name evidence="18">C/EBPalpha-p30</name>
        <sequence type="described" ref="VSP_057547"/>
    </isoform>
    <isoform>
        <id>P49715-4</id>
        <name>4</name>
        <name evidence="19">extended-C/EBPalpha</name>
        <sequence type="described" ref="VSP_057607"/>
    </isoform>
</comment>
<comment type="domain">
    <text evidence="15">The recognition sequence (54-72) is required for interaction with TRIB1.</text>
</comment>
<comment type="PTM">
    <text evidence="2">Phosphorylation at Ser-190 is required for interaction with CDK2, CDK4 and SWI/SNF complex leading to cell cycle inhibition. Dephosphorylated at Ser-190 by protein phosphatase 2A (PP2A) through PI3K/AKT signaling pathway regulation (PubMed:15107404). Phosphorylation at Thr-226 and Thr-230 by GSK3 is constitutive in adipose tissue and lung. In liver, both Thr-226 and Thr-230 are phosphorylated only during feeding but not during fasting. Phosphorylation of the GSK3 consensus sites selectively decreases transactivation activity on IRE-controlled promoters.</text>
</comment>
<comment type="PTM">
    <text evidence="1">Sumoylated, sumoylation blocks the inhibitory effect on cell proliferation by disrupting the interaction with SMARCA2.</text>
</comment>
<comment type="PTM">
    <text evidence="20">Ubiquitinated by COP1 upon interaction with TRIB1.</text>
</comment>
<comment type="disease" evidence="6 7 11">
    <disease id="DI-01171">
        <name>Leukemia, acute myelogenous</name>
        <acronym>AML</acronym>
        <description>A subtype of acute leukemia, a cancer of the white blood cells. AML is a malignant disease of bone marrow characterized by maturational arrest of hematopoietic precursors at an early stage of development. Clonal expansion of myeloid blasts occurs in bone marrow, blood, and other tissue. Myelogenous leukemias develop from changes in cells that normally produce neutrophils, basophils, eosinophils and monocytes.</description>
        <dbReference type="MIM" id="601626"/>
    </disease>
    <text>The disease is caused by variants affecting the gene represented in this entry.</text>
</comment>
<comment type="similarity">
    <text evidence="21">Belongs to the bZIP family. C/EBP subfamily.</text>
</comment>
<comment type="online information" name="Atlas of Genetics and Cytogenetics in Oncology and Haematology">
    <link uri="https://atlasgeneticsoncology.org/gene/40050/CEBPA"/>
</comment>
<gene>
    <name evidence="22" type="primary">CEBPA</name>
    <name evidence="22" type="synonym">CEBP</name>
</gene>